<gene>
    <name type="ORF">B3R</name>
</gene>
<reference key="1">
    <citation type="journal article" date="1990" name="Virology">
        <title>The complete DNA sequence of vaccinia virus.</title>
        <authorList>
            <person name="Goebel S.J."/>
            <person name="Johnson G.P."/>
            <person name="Perkus M.E."/>
            <person name="Davis S.W."/>
            <person name="Winslow J.P."/>
            <person name="Paoletti E."/>
        </authorList>
    </citation>
    <scope>NUCLEOTIDE SEQUENCE [LARGE SCALE GENOMIC DNA]</scope>
</reference>
<reference key="2">
    <citation type="journal article" date="1990" name="Virology">
        <title>Appendix to 'The complete DNA sequence of vaccinia virus'.</title>
        <authorList>
            <person name="Goebel S.J."/>
            <person name="Johnson G.P."/>
            <person name="Perkus M.E."/>
            <person name="Davis S.W."/>
            <person name="Winslow J.P."/>
            <person name="Paoletti E."/>
        </authorList>
    </citation>
    <scope>NUCLEOTIDE SEQUENCE [LARGE SCALE GENOMIC DNA]</scope>
</reference>
<sequence length="124" mass="14379">MKRLETIRHMWSVVYDHFDIVNGKECCYVHTHSSNQNPIPSTVKTNLYMKTMGSCIQMDSMEALEYLSELKESGGWSPRPEMQEFEYPDGVEDTESIERLVEEFFNRSELQAGKLVKFGNSINC</sequence>
<name>SLFN_VACCC</name>
<comment type="similarity">
    <text evidence="1">Belongs to the Schlafen family. Subgroup poxviridae B3 subfamily.</text>
</comment>
<comment type="caution">
    <text evidence="1">The Schlafen-like protein of this strain is much shorter than what is found in other strains.</text>
</comment>
<accession>P21000</accession>
<keyword id="KW-1185">Reference proteome</keyword>
<protein>
    <recommendedName>
        <fullName evidence="1">Schlafen-like protein</fullName>
    </recommendedName>
    <alternativeName>
        <fullName>Protein B3</fullName>
    </alternativeName>
</protein>
<organismHost>
    <name type="scientific">Homo sapiens</name>
    <name type="common">Human</name>
    <dbReference type="NCBI Taxonomy" id="9606"/>
</organismHost>
<proteinExistence type="inferred from homology"/>
<dbReference type="EMBL" id="M35027">
    <property type="protein sequence ID" value="AAA48199.1"/>
    <property type="molecule type" value="Genomic_DNA"/>
</dbReference>
<dbReference type="PIR" id="B42526">
    <property type="entry name" value="B42526"/>
</dbReference>
<dbReference type="SMR" id="P21000"/>
<dbReference type="Proteomes" id="UP000008269">
    <property type="component" value="Segment"/>
</dbReference>
<dbReference type="InterPro" id="IPR031450">
    <property type="entry name" value="Poxin-SLFN/SLFN_N"/>
</dbReference>
<dbReference type="Pfam" id="PF17057">
    <property type="entry name" value="B3R"/>
    <property type="match status" value="1"/>
</dbReference>
<organism>
    <name type="scientific">Vaccinia virus (strain Copenhagen)</name>
    <name type="common">VACV</name>
    <dbReference type="NCBI Taxonomy" id="10249"/>
    <lineage>
        <taxon>Viruses</taxon>
        <taxon>Varidnaviria</taxon>
        <taxon>Bamfordvirae</taxon>
        <taxon>Nucleocytoviricota</taxon>
        <taxon>Pokkesviricetes</taxon>
        <taxon>Chitovirales</taxon>
        <taxon>Poxviridae</taxon>
        <taxon>Chordopoxvirinae</taxon>
        <taxon>Orthopoxvirus</taxon>
        <taxon>Vaccinia virus</taxon>
    </lineage>
</organism>
<evidence type="ECO:0000305" key="1"/>
<feature type="chain" id="PRO_0000099355" description="Schlafen-like protein">
    <location>
        <begin position="1"/>
        <end position="124"/>
    </location>
</feature>